<proteinExistence type="inferred from homology"/>
<dbReference type="EMBL" id="CP001120">
    <property type="protein sequence ID" value="ACF66786.1"/>
    <property type="molecule type" value="Genomic_DNA"/>
</dbReference>
<dbReference type="RefSeq" id="WP_001085926.1">
    <property type="nucleotide sequence ID" value="NC_011083.1"/>
</dbReference>
<dbReference type="SMR" id="B4TCS0"/>
<dbReference type="GeneID" id="93777911"/>
<dbReference type="KEGG" id="seh:SeHA_C4478"/>
<dbReference type="HOGENOM" id="CLU_074237_2_0_6"/>
<dbReference type="Proteomes" id="UP000001866">
    <property type="component" value="Chromosome"/>
</dbReference>
<dbReference type="GO" id="GO:0022625">
    <property type="term" value="C:cytosolic large ribosomal subunit"/>
    <property type="evidence" value="ECO:0007669"/>
    <property type="project" value="TreeGrafter"/>
</dbReference>
<dbReference type="GO" id="GO:0070180">
    <property type="term" value="F:large ribosomal subunit rRNA binding"/>
    <property type="evidence" value="ECO:0007669"/>
    <property type="project" value="UniProtKB-UniRule"/>
</dbReference>
<dbReference type="GO" id="GO:0003735">
    <property type="term" value="F:structural constituent of ribosome"/>
    <property type="evidence" value="ECO:0007669"/>
    <property type="project" value="InterPro"/>
</dbReference>
<dbReference type="GO" id="GO:0006412">
    <property type="term" value="P:translation"/>
    <property type="evidence" value="ECO:0007669"/>
    <property type="project" value="UniProtKB-UniRule"/>
</dbReference>
<dbReference type="CDD" id="cd00349">
    <property type="entry name" value="Ribosomal_L11"/>
    <property type="match status" value="1"/>
</dbReference>
<dbReference type="FunFam" id="1.10.10.250:FF:000001">
    <property type="entry name" value="50S ribosomal protein L11"/>
    <property type="match status" value="1"/>
</dbReference>
<dbReference type="FunFam" id="3.30.1550.10:FF:000001">
    <property type="entry name" value="50S ribosomal protein L11"/>
    <property type="match status" value="1"/>
</dbReference>
<dbReference type="Gene3D" id="1.10.10.250">
    <property type="entry name" value="Ribosomal protein L11, C-terminal domain"/>
    <property type="match status" value="1"/>
</dbReference>
<dbReference type="Gene3D" id="3.30.1550.10">
    <property type="entry name" value="Ribosomal protein L11/L12, N-terminal domain"/>
    <property type="match status" value="1"/>
</dbReference>
<dbReference type="HAMAP" id="MF_00736">
    <property type="entry name" value="Ribosomal_uL11"/>
    <property type="match status" value="1"/>
</dbReference>
<dbReference type="InterPro" id="IPR000911">
    <property type="entry name" value="Ribosomal_uL11"/>
</dbReference>
<dbReference type="InterPro" id="IPR006519">
    <property type="entry name" value="Ribosomal_uL11_bac-typ"/>
</dbReference>
<dbReference type="InterPro" id="IPR020783">
    <property type="entry name" value="Ribosomal_uL11_C"/>
</dbReference>
<dbReference type="InterPro" id="IPR036769">
    <property type="entry name" value="Ribosomal_uL11_C_sf"/>
</dbReference>
<dbReference type="InterPro" id="IPR020785">
    <property type="entry name" value="Ribosomal_uL11_CS"/>
</dbReference>
<dbReference type="InterPro" id="IPR020784">
    <property type="entry name" value="Ribosomal_uL11_N"/>
</dbReference>
<dbReference type="InterPro" id="IPR036796">
    <property type="entry name" value="Ribosomal_uL11_N_sf"/>
</dbReference>
<dbReference type="NCBIfam" id="TIGR01632">
    <property type="entry name" value="L11_bact"/>
    <property type="match status" value="1"/>
</dbReference>
<dbReference type="PANTHER" id="PTHR11661">
    <property type="entry name" value="60S RIBOSOMAL PROTEIN L12"/>
    <property type="match status" value="1"/>
</dbReference>
<dbReference type="PANTHER" id="PTHR11661:SF1">
    <property type="entry name" value="LARGE RIBOSOMAL SUBUNIT PROTEIN UL11M"/>
    <property type="match status" value="1"/>
</dbReference>
<dbReference type="Pfam" id="PF00298">
    <property type="entry name" value="Ribosomal_L11"/>
    <property type="match status" value="1"/>
</dbReference>
<dbReference type="Pfam" id="PF03946">
    <property type="entry name" value="Ribosomal_L11_N"/>
    <property type="match status" value="1"/>
</dbReference>
<dbReference type="SMART" id="SM00649">
    <property type="entry name" value="RL11"/>
    <property type="match status" value="1"/>
</dbReference>
<dbReference type="SUPFAM" id="SSF54747">
    <property type="entry name" value="Ribosomal L11/L12e N-terminal domain"/>
    <property type="match status" value="1"/>
</dbReference>
<dbReference type="SUPFAM" id="SSF46906">
    <property type="entry name" value="Ribosomal protein L11, C-terminal domain"/>
    <property type="match status" value="1"/>
</dbReference>
<dbReference type="PROSITE" id="PS00359">
    <property type="entry name" value="RIBOSOMAL_L11"/>
    <property type="match status" value="1"/>
</dbReference>
<protein>
    <recommendedName>
        <fullName evidence="1">Large ribosomal subunit protein uL11</fullName>
    </recommendedName>
    <alternativeName>
        <fullName evidence="2">50S ribosomal protein L11</fullName>
    </alternativeName>
</protein>
<name>RL11_SALHS</name>
<accession>B4TCS0</accession>
<organism>
    <name type="scientific">Salmonella heidelberg (strain SL476)</name>
    <dbReference type="NCBI Taxonomy" id="454169"/>
    <lineage>
        <taxon>Bacteria</taxon>
        <taxon>Pseudomonadati</taxon>
        <taxon>Pseudomonadota</taxon>
        <taxon>Gammaproteobacteria</taxon>
        <taxon>Enterobacterales</taxon>
        <taxon>Enterobacteriaceae</taxon>
        <taxon>Salmonella</taxon>
    </lineage>
</organism>
<reference key="1">
    <citation type="journal article" date="2011" name="J. Bacteriol.">
        <title>Comparative genomics of 28 Salmonella enterica isolates: evidence for CRISPR-mediated adaptive sublineage evolution.</title>
        <authorList>
            <person name="Fricke W.F."/>
            <person name="Mammel M.K."/>
            <person name="McDermott P.F."/>
            <person name="Tartera C."/>
            <person name="White D.G."/>
            <person name="Leclerc J.E."/>
            <person name="Ravel J."/>
            <person name="Cebula T.A."/>
        </authorList>
    </citation>
    <scope>NUCLEOTIDE SEQUENCE [LARGE SCALE GENOMIC DNA]</scope>
    <source>
        <strain>SL476</strain>
    </source>
</reference>
<gene>
    <name evidence="1" type="primary">rplK</name>
    <name type="ordered locus">SeHA_C4478</name>
</gene>
<feature type="chain" id="PRO_1000195708" description="Large ribosomal subunit protein uL11">
    <location>
        <begin position="1"/>
        <end position="142"/>
    </location>
</feature>
<comment type="function">
    <text evidence="1">Forms part of the ribosomal stalk which helps the ribosome interact with GTP-bound translation factors.</text>
</comment>
<comment type="subunit">
    <text evidence="1">Part of the ribosomal stalk of the 50S ribosomal subunit. Interacts with L10 and the large rRNA to form the base of the stalk. L10 forms an elongated spine to which L12 dimers bind in a sequential fashion forming a multimeric L10(L12)X complex.</text>
</comment>
<comment type="PTM">
    <text evidence="1">One or more lysine residues are methylated.</text>
</comment>
<comment type="similarity">
    <text evidence="1">Belongs to the universal ribosomal protein uL11 family.</text>
</comment>
<sequence length="142" mass="14875">MAKKVQAYVKLQVAAGMANPSPPVGPALGQQGVNIMEFCKAFNAKTDSIEKGLPIPVVITVYADRSFTFVTKTPPAAVLLKKAAGIKSGSGKPNKDKVGKISRAQLQEIAQTKAADMTGADIEAMTRSIEGTARSMGLVVED</sequence>
<evidence type="ECO:0000255" key="1">
    <source>
        <dbReference type="HAMAP-Rule" id="MF_00736"/>
    </source>
</evidence>
<evidence type="ECO:0000305" key="2"/>
<keyword id="KW-0488">Methylation</keyword>
<keyword id="KW-0687">Ribonucleoprotein</keyword>
<keyword id="KW-0689">Ribosomal protein</keyword>
<keyword id="KW-0694">RNA-binding</keyword>
<keyword id="KW-0699">rRNA-binding</keyword>